<proteinExistence type="evidence at protein level"/>
<reference key="1">
    <citation type="journal article" date="2006" name="Biochim. Biophys. Acta">
        <title>N49 phospholipase A2, a unique subgroup of snake venom group II phospholipase A2.</title>
        <authorList>
            <person name="Wei J.-F."/>
            <person name="Wei X.-L."/>
            <person name="Chen Q.-Y."/>
            <person name="Huang T."/>
            <person name="Qiao L.-Y."/>
            <person name="Wang W.-Y."/>
            <person name="Xiong Y.-L."/>
            <person name="He S.-H."/>
        </authorList>
    </citation>
    <scope>NUCLEOTIDE SEQUENCE [MRNA]</scope>
    <scope>PROTEIN SEQUENCE OF 17-40</scope>
    <scope>FUNCTION</scope>
    <scope>MASS SPECTROMETRY</scope>
    <source>
        <strain>Hunan</strain>
        <tissue>Venom</tissue>
        <tissue>Venom gland</tissue>
    </source>
</reference>
<comment type="function">
    <text evidence="2">Snake venom phospholipase A2 (PLA2) that exhibits potent myotoxic activity causing inflammatory cell infiltration, severe myoedema, myonecrosis and myolysis in the gastrocnemius muscles of BALB/c mice.</text>
</comment>
<comment type="subunit">
    <text evidence="1">Homodimer; non-covalently linked.</text>
</comment>
<comment type="subcellular location">
    <subcellularLocation>
        <location>Secreted</location>
    </subcellularLocation>
</comment>
<comment type="tissue specificity">
    <text>Expressed by the venom gland.</text>
</comment>
<comment type="mass spectrometry"/>
<comment type="miscellaneous">
    <text evidence="4">Negative results: does not possess enzymatic, hemolytic and hemorrhagic activities. Fails to induce platelet aggregation by itself, and does not inhibit ADP-induced platelet aggregation (PubMed:16413680).</text>
</comment>
<comment type="similarity">
    <text evidence="3">Belongs to the phospholipase A2 family. Group II subfamily. N49 sub-subfamily.</text>
</comment>
<comment type="caution">
    <text evidence="3">Does not bind calcium as one of the calcium-binding sites is lost (Asp-&gt;Asn in position 64, which corresponds to 'Asn-49' in the current nomenclature).</text>
</comment>
<dbReference type="EMBL" id="DQ212913">
    <property type="protein sequence ID" value="ABA60780.1"/>
    <property type="molecule type" value="mRNA"/>
</dbReference>
<dbReference type="SMR" id="Q3HLQ4"/>
<dbReference type="GO" id="GO:0005576">
    <property type="term" value="C:extracellular region"/>
    <property type="evidence" value="ECO:0007669"/>
    <property type="project" value="UniProtKB-SubCell"/>
</dbReference>
<dbReference type="GO" id="GO:0005509">
    <property type="term" value="F:calcium ion binding"/>
    <property type="evidence" value="ECO:0007669"/>
    <property type="project" value="InterPro"/>
</dbReference>
<dbReference type="GO" id="GO:0047498">
    <property type="term" value="F:calcium-dependent phospholipase A2 activity"/>
    <property type="evidence" value="ECO:0007669"/>
    <property type="project" value="TreeGrafter"/>
</dbReference>
<dbReference type="GO" id="GO:0005543">
    <property type="term" value="F:phospholipid binding"/>
    <property type="evidence" value="ECO:0007669"/>
    <property type="project" value="TreeGrafter"/>
</dbReference>
<dbReference type="GO" id="GO:0090729">
    <property type="term" value="F:toxin activity"/>
    <property type="evidence" value="ECO:0007669"/>
    <property type="project" value="UniProtKB-KW"/>
</dbReference>
<dbReference type="GO" id="GO:0050482">
    <property type="term" value="P:arachidonate secretion"/>
    <property type="evidence" value="ECO:0007669"/>
    <property type="project" value="InterPro"/>
</dbReference>
<dbReference type="GO" id="GO:0016042">
    <property type="term" value="P:lipid catabolic process"/>
    <property type="evidence" value="ECO:0007669"/>
    <property type="project" value="InterPro"/>
</dbReference>
<dbReference type="GO" id="GO:0042130">
    <property type="term" value="P:negative regulation of T cell proliferation"/>
    <property type="evidence" value="ECO:0007669"/>
    <property type="project" value="TreeGrafter"/>
</dbReference>
<dbReference type="GO" id="GO:0006644">
    <property type="term" value="P:phospholipid metabolic process"/>
    <property type="evidence" value="ECO:0007669"/>
    <property type="project" value="InterPro"/>
</dbReference>
<dbReference type="CDD" id="cd00125">
    <property type="entry name" value="PLA2c"/>
    <property type="match status" value="1"/>
</dbReference>
<dbReference type="FunFam" id="1.20.90.10:FF:000001">
    <property type="entry name" value="Basic phospholipase A2 homolog"/>
    <property type="match status" value="1"/>
</dbReference>
<dbReference type="Gene3D" id="1.20.90.10">
    <property type="entry name" value="Phospholipase A2 domain"/>
    <property type="match status" value="1"/>
</dbReference>
<dbReference type="InterPro" id="IPR001211">
    <property type="entry name" value="PLipase_A2"/>
</dbReference>
<dbReference type="InterPro" id="IPR033112">
    <property type="entry name" value="PLipase_A2_Asp_AS"/>
</dbReference>
<dbReference type="InterPro" id="IPR016090">
    <property type="entry name" value="PLipase_A2_dom"/>
</dbReference>
<dbReference type="InterPro" id="IPR036444">
    <property type="entry name" value="PLipase_A2_dom_sf"/>
</dbReference>
<dbReference type="InterPro" id="IPR033113">
    <property type="entry name" value="PLipase_A2_His_AS"/>
</dbReference>
<dbReference type="PANTHER" id="PTHR11716">
    <property type="entry name" value="PHOSPHOLIPASE A2 FAMILY MEMBER"/>
    <property type="match status" value="1"/>
</dbReference>
<dbReference type="PANTHER" id="PTHR11716:SF9">
    <property type="entry name" value="PHOSPHOLIPASE A2, MEMBRANE ASSOCIATED"/>
    <property type="match status" value="1"/>
</dbReference>
<dbReference type="Pfam" id="PF00068">
    <property type="entry name" value="Phospholip_A2_1"/>
    <property type="match status" value="1"/>
</dbReference>
<dbReference type="PRINTS" id="PR00389">
    <property type="entry name" value="PHPHLIPASEA2"/>
</dbReference>
<dbReference type="SMART" id="SM00085">
    <property type="entry name" value="PA2c"/>
    <property type="match status" value="1"/>
</dbReference>
<dbReference type="SUPFAM" id="SSF48619">
    <property type="entry name" value="Phospholipase A2, PLA2"/>
    <property type="match status" value="1"/>
</dbReference>
<dbReference type="PROSITE" id="PS00119">
    <property type="entry name" value="PA2_ASP"/>
    <property type="match status" value="1"/>
</dbReference>
<dbReference type="PROSITE" id="PS00118">
    <property type="entry name" value="PA2_HIS"/>
    <property type="match status" value="1"/>
</dbReference>
<name>PA2HB_PROMU</name>
<feature type="signal peptide" evidence="2">
    <location>
        <begin position="1"/>
        <end position="16"/>
    </location>
</feature>
<feature type="chain" id="PRO_0000419212" description="Basic phospholipase A2 homolog TM-N49">
    <location>
        <begin position="17"/>
        <end position="138"/>
    </location>
</feature>
<feature type="disulfide bond" evidence="1">
    <location>
        <begin position="42"/>
        <end position="131"/>
    </location>
</feature>
<feature type="disulfide bond" evidence="1">
    <location>
        <begin position="44"/>
        <end position="60"/>
    </location>
</feature>
<feature type="disulfide bond" evidence="1">
    <location>
        <begin position="59"/>
        <end position="111"/>
    </location>
</feature>
<feature type="disulfide bond" evidence="1">
    <location>
        <begin position="65"/>
        <end position="138"/>
    </location>
</feature>
<feature type="disulfide bond" evidence="1">
    <location>
        <begin position="66"/>
        <end position="104"/>
    </location>
</feature>
<feature type="disulfide bond" evidence="1">
    <location>
        <begin position="73"/>
        <end position="97"/>
    </location>
</feature>
<feature type="disulfide bond" evidence="1">
    <location>
        <begin position="91"/>
        <end position="102"/>
    </location>
</feature>
<protein>
    <recommendedName>
        <fullName>Basic phospholipase A2 homolog TM-N49</fullName>
        <shortName>svPLA2 homolog</shortName>
    </recommendedName>
</protein>
<keyword id="KW-0903">Direct protein sequencing</keyword>
<keyword id="KW-1015">Disulfide bond</keyword>
<keyword id="KW-0959">Myotoxin</keyword>
<keyword id="KW-0964">Secreted</keyword>
<keyword id="KW-0732">Signal</keyword>
<keyword id="KW-0800">Toxin</keyword>
<sequence>MRTLWIMAVLLLGVEGNLLQFRKMIKKMTGKEPILSYATYGCNCGMAGVGQPVDGTDRCCFVHNCCYEKVTSCSPKWDQYIYSWENGNIVCGEKNPCKKQICECDKAAAMCFRDNVKTYKKRNIFYPKSSCTEPTDTC</sequence>
<accession>Q3HLQ4</accession>
<evidence type="ECO:0000250" key="1"/>
<evidence type="ECO:0000269" key="2">
    <source>
    </source>
</evidence>
<evidence type="ECO:0000305" key="3"/>
<evidence type="ECO:0000305" key="4">
    <source>
    </source>
</evidence>
<organism>
    <name type="scientific">Protobothrops mucrosquamatus</name>
    <name type="common">Taiwan habu</name>
    <name type="synonym">Trimeresurus mucrosquamatus</name>
    <dbReference type="NCBI Taxonomy" id="103944"/>
    <lineage>
        <taxon>Eukaryota</taxon>
        <taxon>Metazoa</taxon>
        <taxon>Chordata</taxon>
        <taxon>Craniata</taxon>
        <taxon>Vertebrata</taxon>
        <taxon>Euteleostomi</taxon>
        <taxon>Lepidosauria</taxon>
        <taxon>Squamata</taxon>
        <taxon>Bifurcata</taxon>
        <taxon>Unidentata</taxon>
        <taxon>Episquamata</taxon>
        <taxon>Toxicofera</taxon>
        <taxon>Serpentes</taxon>
        <taxon>Colubroidea</taxon>
        <taxon>Viperidae</taxon>
        <taxon>Crotalinae</taxon>
        <taxon>Protobothrops</taxon>
    </lineage>
</organism>